<feature type="signal peptide" evidence="1">
    <location>
        <begin position="1"/>
        <end position="26"/>
    </location>
</feature>
<feature type="chain" id="PRO_0000296156" description="Putative cysteine-rich repeat secretory protein 28">
    <location>
        <begin position="27"/>
        <end position="257"/>
    </location>
</feature>
<feature type="domain" description="Gnk2-homologous 1" evidence="2">
    <location>
        <begin position="32"/>
        <end position="136"/>
    </location>
</feature>
<feature type="domain" description="Gnk2-homologous 2" evidence="2">
    <location>
        <begin position="142"/>
        <end position="254"/>
    </location>
</feature>
<comment type="subcellular location">
    <subcellularLocation>
        <location evidence="3">Secreted</location>
    </subcellularLocation>
</comment>
<comment type="similarity">
    <text evidence="3">Belongs to the cysteine-rich repeat secretory protein family.</text>
</comment>
<comment type="caution">
    <text evidence="3">Could be the product of a pseudogene.</text>
</comment>
<comment type="sequence caution" evidence="3">
    <conflict type="erroneous gene model prediction">
        <sequence resource="EMBL-CDS" id="BAB01381"/>
    </conflict>
</comment>
<comment type="sequence caution" evidence="3">
    <conflict type="erroneous termination">
        <sequence resource="EMBL-CDS" id="BAB01381"/>
    </conflict>
    <text>Truncated C-terminus.</text>
</comment>
<proteinExistence type="uncertain"/>
<sequence length="257" mass="29313">MFSTFGSVPILTVVAIQLFLIRNVLSLNLTNAYLHHKCNNTQGIYKRGSAFEKNLNIALRTVIFNGDFRTGFRYGDVGEDPNTVFVMYQCRGDSYWSNCRTCVTTALSGLRKRCPGNKGAIIWYDQCLFEISTVDSYHKIDYENDFYLSNPKNVSNRELFNRETSALLEKLTTKATDKKNIDGANQLVLYAAGEKRIGTKKVYAMVQCTKDLVFTTCSSCLEWIFRMYSDCCDGKQGGRVLGTSCNFRYELYPFLRN</sequence>
<keyword id="KW-1185">Reference proteome</keyword>
<keyword id="KW-0677">Repeat</keyword>
<keyword id="KW-0964">Secreted</keyword>
<keyword id="KW-0732">Signal</keyword>
<organism>
    <name type="scientific">Arabidopsis thaliana</name>
    <name type="common">Mouse-ear cress</name>
    <dbReference type="NCBI Taxonomy" id="3702"/>
    <lineage>
        <taxon>Eukaryota</taxon>
        <taxon>Viridiplantae</taxon>
        <taxon>Streptophyta</taxon>
        <taxon>Embryophyta</taxon>
        <taxon>Tracheophyta</taxon>
        <taxon>Spermatophyta</taxon>
        <taxon>Magnoliopsida</taxon>
        <taxon>eudicotyledons</taxon>
        <taxon>Gunneridae</taxon>
        <taxon>Pentapetalae</taxon>
        <taxon>rosids</taxon>
        <taxon>malvids</taxon>
        <taxon>Brassicales</taxon>
        <taxon>Brassicaceae</taxon>
        <taxon>Camelineae</taxon>
        <taxon>Arabidopsis</taxon>
    </lineage>
</organism>
<dbReference type="EMBL" id="AB028622">
    <property type="protein sequence ID" value="BAB01381.1"/>
    <property type="status" value="ALT_SEQ"/>
    <property type="molecule type" value="Genomic_DNA"/>
</dbReference>
<dbReference type="EMBL" id="CP002686">
    <property type="status" value="NOT_ANNOTATED_CDS"/>
    <property type="molecule type" value="Genomic_DNA"/>
</dbReference>
<dbReference type="SMR" id="Q9LRK9"/>
<dbReference type="Araport" id="AT3G21985"/>
<dbReference type="TAIR" id="AT3G21985"/>
<dbReference type="InParanoid" id="Q9LRK9"/>
<dbReference type="Proteomes" id="UP000006548">
    <property type="component" value="Chromosome 3"/>
</dbReference>
<dbReference type="ExpressionAtlas" id="Q9LRK9">
    <property type="expression patterns" value="baseline"/>
</dbReference>
<dbReference type="GO" id="GO:0005576">
    <property type="term" value="C:extracellular region"/>
    <property type="evidence" value="ECO:0007669"/>
    <property type="project" value="UniProtKB-SubCell"/>
</dbReference>
<dbReference type="CDD" id="cd23509">
    <property type="entry name" value="Gnk2-like"/>
    <property type="match status" value="2"/>
</dbReference>
<dbReference type="FunFam" id="3.30.430.20:FF:000002">
    <property type="entry name" value="Cysteine-rich receptor-like protein kinase 10"/>
    <property type="match status" value="1"/>
</dbReference>
<dbReference type="Gene3D" id="3.30.430.20">
    <property type="entry name" value="Gnk2 domain, C-X8-C-X2-C motif"/>
    <property type="match status" value="2"/>
</dbReference>
<dbReference type="InterPro" id="IPR050581">
    <property type="entry name" value="CRR_secretory_protein"/>
</dbReference>
<dbReference type="InterPro" id="IPR002902">
    <property type="entry name" value="GNK2"/>
</dbReference>
<dbReference type="InterPro" id="IPR038408">
    <property type="entry name" value="GNK2_sf"/>
</dbReference>
<dbReference type="PANTHER" id="PTHR32411:SF54">
    <property type="entry name" value="CYSTEINE-RICH REPEAT SECRETORY PROTEIN 29-RELATED"/>
    <property type="match status" value="1"/>
</dbReference>
<dbReference type="PANTHER" id="PTHR32411">
    <property type="entry name" value="CYSTEINE-RICH REPEAT SECRETORY PROTEIN 38-RELATED"/>
    <property type="match status" value="1"/>
</dbReference>
<dbReference type="Pfam" id="PF01657">
    <property type="entry name" value="Stress-antifung"/>
    <property type="match status" value="2"/>
</dbReference>
<dbReference type="PROSITE" id="PS51473">
    <property type="entry name" value="GNK2"/>
    <property type="match status" value="2"/>
</dbReference>
<gene>
    <name type="primary">CRRSP28</name>
    <name type="ordered locus">At3g21985</name>
    <name type="ORF">MZN24.16</name>
</gene>
<reference key="1">
    <citation type="journal article" date="2000" name="DNA Res.">
        <title>Structural analysis of Arabidopsis thaliana chromosome 3. I. Sequence features of the regions of 4,504,864 bp covered by sixty P1 and TAC clones.</title>
        <authorList>
            <person name="Sato S."/>
            <person name="Nakamura Y."/>
            <person name="Kaneko T."/>
            <person name="Katoh T."/>
            <person name="Asamizu E."/>
            <person name="Tabata S."/>
        </authorList>
    </citation>
    <scope>NUCLEOTIDE SEQUENCE [LARGE SCALE GENOMIC DNA]</scope>
    <source>
        <strain>cv. Columbia</strain>
    </source>
</reference>
<reference key="2">
    <citation type="journal article" date="2017" name="Plant J.">
        <title>Araport11: a complete reannotation of the Arabidopsis thaliana reference genome.</title>
        <authorList>
            <person name="Cheng C.Y."/>
            <person name="Krishnakumar V."/>
            <person name="Chan A.P."/>
            <person name="Thibaud-Nissen F."/>
            <person name="Schobel S."/>
            <person name="Town C.D."/>
        </authorList>
    </citation>
    <scope>GENOME REANNOTATION</scope>
    <source>
        <strain>cv. Columbia</strain>
    </source>
</reference>
<reference key="3">
    <citation type="journal article" date="2001" name="Plant Physiol.">
        <title>A superfamily of proteins with novel cysteine-rich repeats.</title>
        <authorList>
            <person name="Chen Z."/>
        </authorList>
    </citation>
    <scope>GENE FAMILY ORGANIZATION</scope>
    <scope>NOMENCLATURE</scope>
</reference>
<name>CRR28_ARATH</name>
<accession>Q9LRK9</accession>
<evidence type="ECO:0000255" key="1"/>
<evidence type="ECO:0000255" key="2">
    <source>
        <dbReference type="PROSITE-ProRule" id="PRU00806"/>
    </source>
</evidence>
<evidence type="ECO:0000305" key="3"/>
<protein>
    <recommendedName>
        <fullName>Putative cysteine-rich repeat secretory protein 28</fullName>
    </recommendedName>
</protein>